<dbReference type="EMBL" id="AB108841">
    <property type="protein sequence ID" value="BAC99308.1"/>
    <property type="molecule type" value="mRNA"/>
</dbReference>
<dbReference type="SMR" id="Q76DI2"/>
<dbReference type="CAZy" id="CBM39">
    <property type="family name" value="Carbohydrate-Binding Module Family 39"/>
</dbReference>
<dbReference type="CAZy" id="GH16">
    <property type="family name" value="Glycoside Hydrolase Family 16"/>
</dbReference>
<dbReference type="GlyCosmos" id="Q76DI2">
    <property type="glycosylation" value="1 site, No reported glycans"/>
</dbReference>
<dbReference type="GO" id="GO:0005576">
    <property type="term" value="C:extracellular region"/>
    <property type="evidence" value="ECO:0000314"/>
    <property type="project" value="UniProtKB"/>
</dbReference>
<dbReference type="GO" id="GO:0030246">
    <property type="term" value="F:carbohydrate binding"/>
    <property type="evidence" value="ECO:0007669"/>
    <property type="project" value="InterPro"/>
</dbReference>
<dbReference type="GO" id="GO:0004553">
    <property type="term" value="F:hydrolase activity, hydrolyzing O-glycosyl compounds"/>
    <property type="evidence" value="ECO:0007669"/>
    <property type="project" value="InterPro"/>
</dbReference>
<dbReference type="GO" id="GO:0005975">
    <property type="term" value="P:carbohydrate metabolic process"/>
    <property type="evidence" value="ECO:0007669"/>
    <property type="project" value="InterPro"/>
</dbReference>
<dbReference type="GO" id="GO:0042742">
    <property type="term" value="P:defense response to bacterium"/>
    <property type="evidence" value="ECO:0000314"/>
    <property type="project" value="UniProtKB"/>
</dbReference>
<dbReference type="GO" id="GO:0045087">
    <property type="term" value="P:innate immune response"/>
    <property type="evidence" value="ECO:0007669"/>
    <property type="project" value="UniProtKB-KW"/>
</dbReference>
<dbReference type="GO" id="GO:0045088">
    <property type="term" value="P:regulation of innate immune response"/>
    <property type="evidence" value="ECO:0000314"/>
    <property type="project" value="UniProtKB"/>
</dbReference>
<dbReference type="CDD" id="cd02179">
    <property type="entry name" value="GH16_beta_GRP"/>
    <property type="match status" value="1"/>
</dbReference>
<dbReference type="FunFam" id="2.60.120.200:FF:000235">
    <property type="entry name" value="Beta-1,3-glucan-binding protein"/>
    <property type="match status" value="1"/>
</dbReference>
<dbReference type="FunFam" id="2.60.40.2140:FF:000001">
    <property type="entry name" value="Beta-1,3-glucan-binding protein"/>
    <property type="match status" value="1"/>
</dbReference>
<dbReference type="Gene3D" id="2.60.120.200">
    <property type="match status" value="1"/>
</dbReference>
<dbReference type="Gene3D" id="2.60.40.2140">
    <property type="entry name" value="Beta-1,3-glucan-recognition protein, N-terminal domain"/>
    <property type="match status" value="1"/>
</dbReference>
<dbReference type="InterPro" id="IPR031756">
    <property type="entry name" value="BGBP_N"/>
</dbReference>
<dbReference type="InterPro" id="IPR043030">
    <property type="entry name" value="BGBP_N_sf"/>
</dbReference>
<dbReference type="InterPro" id="IPR013320">
    <property type="entry name" value="ConA-like_dom_sf"/>
</dbReference>
<dbReference type="InterPro" id="IPR000757">
    <property type="entry name" value="GH16"/>
</dbReference>
<dbReference type="InterPro" id="IPR035806">
    <property type="entry name" value="GH16_GRP_C"/>
</dbReference>
<dbReference type="InterPro" id="IPR050546">
    <property type="entry name" value="Glycosyl_Hydrlase_16"/>
</dbReference>
<dbReference type="PANTHER" id="PTHR10963">
    <property type="entry name" value="GLYCOSYL HYDROLASE-RELATED"/>
    <property type="match status" value="1"/>
</dbReference>
<dbReference type="PANTHER" id="PTHR10963:SF60">
    <property type="entry name" value="GRAM-NEGATIVE BACTERIA-BINDING PROTEIN 1-RELATED"/>
    <property type="match status" value="1"/>
</dbReference>
<dbReference type="Pfam" id="PF15886">
    <property type="entry name" value="CBM39"/>
    <property type="match status" value="1"/>
</dbReference>
<dbReference type="Pfam" id="PF00722">
    <property type="entry name" value="Glyco_hydro_16"/>
    <property type="match status" value="1"/>
</dbReference>
<dbReference type="SUPFAM" id="SSF49899">
    <property type="entry name" value="Concanavalin A-like lectins/glucanases"/>
    <property type="match status" value="1"/>
</dbReference>
<dbReference type="PROSITE" id="PS51969">
    <property type="entry name" value="CBM39"/>
    <property type="match status" value="1"/>
</dbReference>
<dbReference type="PROSITE" id="PS51762">
    <property type="entry name" value="GH16_2"/>
    <property type="match status" value="1"/>
</dbReference>
<gene>
    <name type="primary">GRP</name>
</gene>
<sequence>MKVLVVFIFCLVRSTFGQFEVPDALVEVFRPRGLRVSIPDQEGIKLFAFHGKINEEMNGREGGTFSRDILKAKNGRWTFYDANARLKEGDILYYWTYVDYFDGKNKLGYPNDDQKFVVKQLLDKDGAAPSVTPPTVTKAPPQEHTTLESGCKASVTTKVNERVCAGEQIFHEDFTTFETNIWRPEVKFADKPDYEFVFYRAGPPNLQVKHHRLTIRPVPSDAVFGEGFVSRREKVNLAPACTGVHGSIECVQTPGAFLILPPVTSAQISTKGKWSFKYGKVEIRAKLPKGDWIYPELYLNPVNEEYGPGYASGQIRIAFSGGNEDLCRDLRGGCILGSRPAARNYAVKNIVKNSGSWSDDFHKFIVIWKPDQITMMVDDQVYGNIYPPEGGFVSEAYNLDLVNVERWRGGTSFAPFDKEMYLVLGVGVGGHCFEDRSDATKPWTNNDPKSQKKFYQAAAQWGATWSNASRLEVDYVKVSAL</sequence>
<proteinExistence type="evidence at protein level"/>
<protein>
    <recommendedName>
        <fullName>Beta-1,3-glucan-binding protein</fullName>
        <shortName>BGBP</shortName>
    </recommendedName>
    <alternativeName>
        <fullName>Beta-1,3-glucan recognition protein</fullName>
        <shortName>BetaGRP</shortName>
    </alternativeName>
</protein>
<organism>
    <name type="scientific">Tenebrio molitor</name>
    <name type="common">Yellow mealworm beetle</name>
    <dbReference type="NCBI Taxonomy" id="7067"/>
    <lineage>
        <taxon>Eukaryota</taxon>
        <taxon>Metazoa</taxon>
        <taxon>Ecdysozoa</taxon>
        <taxon>Arthropoda</taxon>
        <taxon>Hexapoda</taxon>
        <taxon>Insecta</taxon>
        <taxon>Pterygota</taxon>
        <taxon>Neoptera</taxon>
        <taxon>Endopterygota</taxon>
        <taxon>Coleoptera</taxon>
        <taxon>Polyphaga</taxon>
        <taxon>Cucujiformia</taxon>
        <taxon>Tenebrionidae</taxon>
        <taxon>Tenebrio</taxon>
    </lineage>
</organism>
<name>BGBP_TENMO</name>
<keyword id="KW-0903">Direct protein sequencing</keyword>
<keyword id="KW-0325">Glycoprotein</keyword>
<keyword id="KW-0391">Immunity</keyword>
<keyword id="KW-0399">Innate immunity</keyword>
<keyword id="KW-0964">Secreted</keyword>
<keyword id="KW-0732">Signal</keyword>
<comment type="function">
    <text evidence="4">Involved in the recognition of invading microorganisms. Binds specifically to beta-1,3-glucan and activates the phenoloxidase cascade.</text>
</comment>
<comment type="subcellular location">
    <subcellularLocation>
        <location evidence="4">Secreted</location>
    </subcellularLocation>
</comment>
<comment type="tissue specificity">
    <text evidence="4">Hemolymph.</text>
</comment>
<comment type="PTM">
    <text evidence="4">The N-terminus is blocked.</text>
</comment>
<comment type="similarity">
    <text evidence="5">Belongs to the insect beta-1,3-glucan binding protein family.</text>
</comment>
<feature type="signal peptide" evidence="1">
    <location>
        <begin position="1"/>
        <end position="17"/>
    </location>
</feature>
<feature type="chain" id="PRO_0000002824" description="Beta-1,3-glucan-binding protein">
    <location>
        <begin position="18"/>
        <end position="481"/>
    </location>
</feature>
<feature type="domain" description="CBM39" evidence="3">
    <location>
        <begin position="19"/>
        <end position="123"/>
    </location>
</feature>
<feature type="domain" description="GH16" evidence="2">
    <location>
        <begin position="211"/>
        <end position="481"/>
    </location>
</feature>
<feature type="glycosylation site" description="N-linked (GlcNAc...) asparagine" evidence="1">
    <location>
        <position position="467"/>
    </location>
</feature>
<reference evidence="5 6" key="1">
    <citation type="journal article" date="2003" name="J. Biol. Chem.">
        <title>Characterization and properties of a 1,3-beta-D-glucan pattern recognition protein of Tenebrio molitor larvae that is specifically degraded by serine protease during prophenoloxidase activation.</title>
        <authorList>
            <person name="Zhang R."/>
            <person name="Cho H.Y."/>
            <person name="Kim H.S."/>
            <person name="Ma Y.G."/>
            <person name="Osaki T."/>
            <person name="Kawbata S."/>
            <person name="Soederhaell K."/>
            <person name="Lee B.L."/>
        </authorList>
    </citation>
    <scope>NUCLEOTIDE SEQUENCE [MRNA]</scope>
    <scope>PROTEIN SEQUENCE OF 88-103; 159-173; 188-202; 235-249; 290-301; 364-378 AND 419-430</scope>
    <scope>FUNCTION</scope>
    <scope>SUBCELLULAR LOCATION</scope>
    <scope>TISSUE SPECIFICITY</scope>
    <source>
        <tissue evidence="4">Larva</tissue>
        <tissue evidence="4">Larval hemolymph</tissue>
    </source>
</reference>
<accession>Q76DI2</accession>
<evidence type="ECO:0000255" key="1"/>
<evidence type="ECO:0000255" key="2">
    <source>
        <dbReference type="PROSITE-ProRule" id="PRU01098"/>
    </source>
</evidence>
<evidence type="ECO:0000255" key="3">
    <source>
        <dbReference type="PROSITE-ProRule" id="PRU01314"/>
    </source>
</evidence>
<evidence type="ECO:0000269" key="4">
    <source>
    </source>
</evidence>
<evidence type="ECO:0000305" key="5"/>
<evidence type="ECO:0000312" key="6">
    <source>
        <dbReference type="EMBL" id="BAC99308.1"/>
    </source>
</evidence>